<protein>
    <recommendedName>
        <fullName>POU domain, class 2, transcription factor 1</fullName>
    </recommendedName>
    <alternativeName>
        <fullName>NF-A1</fullName>
    </alternativeName>
    <alternativeName>
        <fullName>Octamer-binding protein 1</fullName>
        <shortName>Oct-1</shortName>
    </alternativeName>
    <alternativeName>
        <fullName>Octamer-binding transcription factor 1</fullName>
        <shortName>OTF-1</shortName>
    </alternativeName>
</protein>
<proteinExistence type="inferred from homology"/>
<accession>Q28466</accession>
<feature type="chain" id="PRO_0000100709" description="POU domain, class 2, transcription factor 1">
    <location>
        <begin position="1" status="less than"/>
        <end position="75" status="greater than"/>
    </location>
</feature>
<feature type="region of interest" description="Disordered" evidence="3">
    <location>
        <begin position="1"/>
        <end position="56"/>
    </location>
</feature>
<feature type="compositionally biased region" description="Low complexity" evidence="3">
    <location>
        <begin position="1"/>
        <end position="52"/>
    </location>
</feature>
<feature type="non-terminal residue">
    <location>
        <position position="1"/>
    </location>
</feature>
<feature type="non-terminal residue">
    <location>
        <position position="75"/>
    </location>
</feature>
<dbReference type="EMBL" id="M97955">
    <property type="protein sequence ID" value="AAA31607.1"/>
    <property type="molecule type" value="Genomic_DNA"/>
</dbReference>
<dbReference type="GO" id="GO:0005634">
    <property type="term" value="C:nucleus"/>
    <property type="evidence" value="ECO:0007669"/>
    <property type="project" value="UniProtKB-SubCell"/>
</dbReference>
<dbReference type="GO" id="GO:0003677">
    <property type="term" value="F:DNA binding"/>
    <property type="evidence" value="ECO:0007669"/>
    <property type="project" value="UniProtKB-KW"/>
</dbReference>
<dbReference type="InterPro" id="IPR045703">
    <property type="entry name" value="POU2F1_C"/>
</dbReference>
<dbReference type="Pfam" id="PF19536">
    <property type="entry name" value="POU2F1_C"/>
    <property type="match status" value="1"/>
</dbReference>
<organism>
    <name type="scientific">Notamacropus eugenii</name>
    <name type="common">Tammar wallaby</name>
    <name type="synonym">Macropus eugenii</name>
    <dbReference type="NCBI Taxonomy" id="9315"/>
    <lineage>
        <taxon>Eukaryota</taxon>
        <taxon>Metazoa</taxon>
        <taxon>Chordata</taxon>
        <taxon>Craniata</taxon>
        <taxon>Vertebrata</taxon>
        <taxon>Euteleostomi</taxon>
        <taxon>Mammalia</taxon>
        <taxon>Metatheria</taxon>
        <taxon>Diprotodontia</taxon>
        <taxon>Macropodidae</taxon>
        <taxon>Notamacropus</taxon>
    </lineage>
</organism>
<reference key="1">
    <citation type="journal article" date="1994" name="Cytogenet. Cell Genet.">
        <title>Identification of a marsupial OTF1 gene: cross-species STS analysis and in situ cross-hybridization to Macropus eugenii chromosomes 3/4 and 5.</title>
        <authorList>
            <person name="Sturm R.A."/>
            <person name="Francis D.I."/>
            <person name="Cassady J.L."/>
            <person name="Graves J.A."/>
        </authorList>
    </citation>
    <scope>NUCLEOTIDE SEQUENCE [GENOMIC DNA]</scope>
</reference>
<keyword id="KW-0010">Activator</keyword>
<keyword id="KW-0238">DNA-binding</keyword>
<keyword id="KW-0371">Homeobox</keyword>
<keyword id="KW-0539">Nucleus</keyword>
<keyword id="KW-0804">Transcription</keyword>
<keyword id="KW-0805">Transcription regulation</keyword>
<comment type="function">
    <text evidence="2">Transcription factor that binds to the octamer motif (5'-ATTTGCAT-3') and activates the promoters of the genes for some small nuclear RNAs (snRNA) and of genes such as those for histone H2B and immunoglobulins. Modulates transcription transactivation by NR3C1, AR and PGR.</text>
</comment>
<comment type="subunit">
    <text evidence="2">Interacts with POU2AF1; the interaction increases POU2F1 transactivation activity. Interacts with NR3C1, AR, PGR and HCFC1.</text>
</comment>
<comment type="subcellular location">
    <subcellularLocation>
        <location>Nucleus</location>
    </subcellularLocation>
</comment>
<comment type="PTM">
    <text evidence="1">Phosphorylated by PRKDC.</text>
</comment>
<comment type="similarity">
    <text evidence="4">Belongs to the POU transcription factor family. Class-2 subfamily.</text>
</comment>
<gene>
    <name type="primary">POU2F1</name>
    <name type="synonym">OCT-1</name>
    <name type="synonym">OCT1</name>
    <name type="synonym">OTF1</name>
</gene>
<sequence>NNTATVISAAPPASSAVTLPSMSPSPSASASEASSASETSTTQTTSTPLSSPLGTGQVMVTASGLQTAAAALQGA</sequence>
<name>PO2F1_NOTEU</name>
<evidence type="ECO:0000250" key="1"/>
<evidence type="ECO:0000250" key="2">
    <source>
        <dbReference type="UniProtKB" id="P14859"/>
    </source>
</evidence>
<evidence type="ECO:0000256" key="3">
    <source>
        <dbReference type="SAM" id="MobiDB-lite"/>
    </source>
</evidence>
<evidence type="ECO:0000305" key="4"/>